<organism>
    <name type="scientific">Bos taurus</name>
    <name type="common">Bovine</name>
    <dbReference type="NCBI Taxonomy" id="9913"/>
    <lineage>
        <taxon>Eukaryota</taxon>
        <taxon>Metazoa</taxon>
        <taxon>Chordata</taxon>
        <taxon>Craniata</taxon>
        <taxon>Vertebrata</taxon>
        <taxon>Euteleostomi</taxon>
        <taxon>Mammalia</taxon>
        <taxon>Eutheria</taxon>
        <taxon>Laurasiatheria</taxon>
        <taxon>Artiodactyla</taxon>
        <taxon>Ruminantia</taxon>
        <taxon>Pecora</taxon>
        <taxon>Bovidae</taxon>
        <taxon>Bovinae</taxon>
        <taxon>Bos</taxon>
    </lineage>
</organism>
<gene>
    <name type="primary">EIF4A3</name>
    <name type="synonym">DDX48</name>
</gene>
<evidence type="ECO:0000250" key="1">
    <source>
        <dbReference type="UniProtKB" id="P38919"/>
    </source>
</evidence>
<evidence type="ECO:0000250" key="2">
    <source>
        <dbReference type="UniProtKB" id="P60842"/>
    </source>
</evidence>
<evidence type="ECO:0000250" key="3">
    <source>
        <dbReference type="UniProtKB" id="P60843"/>
    </source>
</evidence>
<evidence type="ECO:0000250" key="4">
    <source>
        <dbReference type="UniProtKB" id="Q3B8Q2"/>
    </source>
</evidence>
<evidence type="ECO:0000255" key="5">
    <source>
        <dbReference type="PROSITE-ProRule" id="PRU00541"/>
    </source>
</evidence>
<evidence type="ECO:0000255" key="6">
    <source>
        <dbReference type="PROSITE-ProRule" id="PRU00542"/>
    </source>
</evidence>
<evidence type="ECO:0000305" key="7"/>
<reference key="1">
    <citation type="submission" date="2005-12" db="EMBL/GenBank/DDBJ databases">
        <authorList>
            <consortium name="NIH - Mammalian Gene Collection (MGC) project"/>
        </authorList>
    </citation>
    <scope>NUCLEOTIDE SEQUENCE [LARGE SCALE MRNA]</scope>
    <source>
        <strain>Crossbred X Angus</strain>
        <tissue>Liver</tissue>
    </source>
</reference>
<accession>Q2NL22</accession>
<dbReference type="EC" id="3.6.4.13" evidence="1"/>
<dbReference type="EMBL" id="BC111184">
    <property type="protein sequence ID" value="AAI11185.1"/>
    <property type="molecule type" value="mRNA"/>
</dbReference>
<dbReference type="RefSeq" id="NP_001039653.1">
    <property type="nucleotide sequence ID" value="NM_001046188.2"/>
</dbReference>
<dbReference type="SMR" id="Q2NL22"/>
<dbReference type="FunCoup" id="Q2NL22">
    <property type="interactions" value="4846"/>
</dbReference>
<dbReference type="STRING" id="9913.ENSBTAP00000021327"/>
<dbReference type="PaxDb" id="9913-ENSBTAP00000021327"/>
<dbReference type="PeptideAtlas" id="Q2NL22"/>
<dbReference type="Ensembl" id="ENSBTAT00000021327.5">
    <property type="protein sequence ID" value="ENSBTAP00000021327.3"/>
    <property type="gene ID" value="ENSBTAG00000016023.5"/>
</dbReference>
<dbReference type="GeneID" id="515145"/>
<dbReference type="KEGG" id="bta:515145"/>
<dbReference type="CTD" id="9775"/>
<dbReference type="VEuPathDB" id="HostDB:ENSBTAG00000016023"/>
<dbReference type="VGNC" id="VGNC:28406">
    <property type="gene designation" value="EIF4A3"/>
</dbReference>
<dbReference type="eggNOG" id="KOG0328">
    <property type="taxonomic scope" value="Eukaryota"/>
</dbReference>
<dbReference type="GeneTree" id="ENSGT00940000155037"/>
<dbReference type="HOGENOM" id="CLU_003041_1_0_1"/>
<dbReference type="InParanoid" id="Q2NL22"/>
<dbReference type="OMA" id="TRFHDFK"/>
<dbReference type="OrthoDB" id="10265785at2759"/>
<dbReference type="TreeFam" id="TF300466"/>
<dbReference type="Reactome" id="R-BTA-1169408">
    <property type="pathway name" value="ISG15 antiviral mechanism"/>
</dbReference>
<dbReference type="Reactome" id="R-BTA-159236">
    <property type="pathway name" value="Transport of Mature mRNA derived from an Intron-Containing Transcript"/>
</dbReference>
<dbReference type="Reactome" id="R-BTA-429947">
    <property type="pathway name" value="Deadenylation of mRNA"/>
</dbReference>
<dbReference type="Reactome" id="R-BTA-72163">
    <property type="pathway name" value="mRNA Splicing - Major Pathway"/>
</dbReference>
<dbReference type="Reactome" id="R-BTA-72187">
    <property type="pathway name" value="mRNA 3'-end processing"/>
</dbReference>
<dbReference type="Reactome" id="R-BTA-73856">
    <property type="pathway name" value="RNA Polymerase II Transcription Termination"/>
</dbReference>
<dbReference type="Reactome" id="R-BTA-975957">
    <property type="pathway name" value="Nonsense Mediated Decay (NMD) enhanced by the Exon Junction Complex (EJC)"/>
</dbReference>
<dbReference type="CD-CODE" id="D7FE2080">
    <property type="entry name" value="Nucleolus"/>
</dbReference>
<dbReference type="Proteomes" id="UP000009136">
    <property type="component" value="Chromosome 19"/>
</dbReference>
<dbReference type="Bgee" id="ENSBTAG00000016023">
    <property type="expression patterns" value="Expressed in ureter and 104 other cell types or tissues"/>
</dbReference>
<dbReference type="GO" id="GO:0071013">
    <property type="term" value="C:catalytic step 2 spliceosome"/>
    <property type="evidence" value="ECO:0000318"/>
    <property type="project" value="GO_Central"/>
</dbReference>
<dbReference type="GO" id="GO:0005737">
    <property type="term" value="C:cytoplasm"/>
    <property type="evidence" value="ECO:0007669"/>
    <property type="project" value="UniProtKB-SubCell"/>
</dbReference>
<dbReference type="GO" id="GO:0035145">
    <property type="term" value="C:exon-exon junction complex"/>
    <property type="evidence" value="ECO:0007669"/>
    <property type="project" value="Ensembl"/>
</dbReference>
<dbReference type="GO" id="GO:0016607">
    <property type="term" value="C:nuclear speck"/>
    <property type="evidence" value="ECO:0007669"/>
    <property type="project" value="UniProtKB-SubCell"/>
</dbReference>
<dbReference type="GO" id="GO:0005730">
    <property type="term" value="C:nucleolus"/>
    <property type="evidence" value="ECO:0000318"/>
    <property type="project" value="GO_Central"/>
</dbReference>
<dbReference type="GO" id="GO:0005634">
    <property type="term" value="C:nucleus"/>
    <property type="evidence" value="ECO:0000250"/>
    <property type="project" value="UniProtKB"/>
</dbReference>
<dbReference type="GO" id="GO:0071006">
    <property type="term" value="C:U2-type catalytic step 1 spliceosome"/>
    <property type="evidence" value="ECO:0000250"/>
    <property type="project" value="UniProtKB"/>
</dbReference>
<dbReference type="GO" id="GO:0005524">
    <property type="term" value="F:ATP binding"/>
    <property type="evidence" value="ECO:0007669"/>
    <property type="project" value="UniProtKB-KW"/>
</dbReference>
<dbReference type="GO" id="GO:0016887">
    <property type="term" value="F:ATP hydrolysis activity"/>
    <property type="evidence" value="ECO:0007669"/>
    <property type="project" value="RHEA"/>
</dbReference>
<dbReference type="GO" id="GO:0003729">
    <property type="term" value="F:mRNA binding"/>
    <property type="evidence" value="ECO:0000318"/>
    <property type="project" value="GO_Central"/>
</dbReference>
<dbReference type="GO" id="GO:0008143">
    <property type="term" value="F:poly(A) binding"/>
    <property type="evidence" value="ECO:0007669"/>
    <property type="project" value="Ensembl"/>
</dbReference>
<dbReference type="GO" id="GO:0003724">
    <property type="term" value="F:RNA helicase activity"/>
    <property type="evidence" value="ECO:0000318"/>
    <property type="project" value="GO_Central"/>
</dbReference>
<dbReference type="GO" id="GO:0048701">
    <property type="term" value="P:embryonic cranial skeleton morphogenesis"/>
    <property type="evidence" value="ECO:0000250"/>
    <property type="project" value="UniProtKB"/>
</dbReference>
<dbReference type="GO" id="GO:0000398">
    <property type="term" value="P:mRNA splicing, via spliceosome"/>
    <property type="evidence" value="ECO:0000250"/>
    <property type="project" value="UniProtKB"/>
</dbReference>
<dbReference type="GO" id="GO:0051028">
    <property type="term" value="P:mRNA transport"/>
    <property type="evidence" value="ECO:0007669"/>
    <property type="project" value="UniProtKB-KW"/>
</dbReference>
<dbReference type="GO" id="GO:0017148">
    <property type="term" value="P:negative regulation of translation"/>
    <property type="evidence" value="ECO:0007669"/>
    <property type="project" value="Ensembl"/>
</dbReference>
<dbReference type="GO" id="GO:0000184">
    <property type="term" value="P:nuclear-transcribed mRNA catabolic process, nonsense-mediated decay"/>
    <property type="evidence" value="ECO:0007669"/>
    <property type="project" value="UniProtKB-KW"/>
</dbReference>
<dbReference type="GO" id="GO:0045727">
    <property type="term" value="P:positive regulation of translation"/>
    <property type="evidence" value="ECO:0007669"/>
    <property type="project" value="Ensembl"/>
</dbReference>
<dbReference type="GO" id="GO:0000381">
    <property type="term" value="P:regulation of alternative mRNA splicing, via spliceosome"/>
    <property type="evidence" value="ECO:0000250"/>
    <property type="project" value="UniProtKB"/>
</dbReference>
<dbReference type="GO" id="GO:2000622">
    <property type="term" value="P:regulation of nuclear-transcribed mRNA catabolic process, nonsense-mediated decay"/>
    <property type="evidence" value="ECO:0007669"/>
    <property type="project" value="Ensembl"/>
</dbReference>
<dbReference type="GO" id="GO:0006364">
    <property type="term" value="P:rRNA processing"/>
    <property type="evidence" value="ECO:0007669"/>
    <property type="project" value="UniProtKB-KW"/>
</dbReference>
<dbReference type="CDD" id="cd18045">
    <property type="entry name" value="DEADc_EIF4AIII_DDX48"/>
    <property type="match status" value="1"/>
</dbReference>
<dbReference type="CDD" id="cd18787">
    <property type="entry name" value="SF2_C_DEAD"/>
    <property type="match status" value="1"/>
</dbReference>
<dbReference type="FunFam" id="3.40.50.300:FF:000031">
    <property type="entry name" value="Eukaryotic initiation factor 4A-III"/>
    <property type="match status" value="1"/>
</dbReference>
<dbReference type="FunFam" id="3.40.50.300:FF:000498">
    <property type="entry name" value="Eukaryotic initiation factor 4A-III"/>
    <property type="match status" value="1"/>
</dbReference>
<dbReference type="Gene3D" id="3.40.50.300">
    <property type="entry name" value="P-loop containing nucleotide triphosphate hydrolases"/>
    <property type="match status" value="2"/>
</dbReference>
<dbReference type="InterPro" id="IPR011545">
    <property type="entry name" value="DEAD/DEAH_box_helicase_dom"/>
</dbReference>
<dbReference type="InterPro" id="IPR014001">
    <property type="entry name" value="Helicase_ATP-bd"/>
</dbReference>
<dbReference type="InterPro" id="IPR001650">
    <property type="entry name" value="Helicase_C-like"/>
</dbReference>
<dbReference type="InterPro" id="IPR027417">
    <property type="entry name" value="P-loop_NTPase"/>
</dbReference>
<dbReference type="InterPro" id="IPR000629">
    <property type="entry name" value="RNA-helicase_DEAD-box_CS"/>
</dbReference>
<dbReference type="InterPro" id="IPR014014">
    <property type="entry name" value="RNA_helicase_DEAD_Q_motif"/>
</dbReference>
<dbReference type="PANTHER" id="PTHR47958">
    <property type="entry name" value="ATP-DEPENDENT RNA HELICASE DBP3"/>
    <property type="match status" value="1"/>
</dbReference>
<dbReference type="Pfam" id="PF00270">
    <property type="entry name" value="DEAD"/>
    <property type="match status" value="1"/>
</dbReference>
<dbReference type="Pfam" id="PF00271">
    <property type="entry name" value="Helicase_C"/>
    <property type="match status" value="1"/>
</dbReference>
<dbReference type="SMART" id="SM00487">
    <property type="entry name" value="DEXDc"/>
    <property type="match status" value="1"/>
</dbReference>
<dbReference type="SMART" id="SM00490">
    <property type="entry name" value="HELICc"/>
    <property type="match status" value="1"/>
</dbReference>
<dbReference type="SUPFAM" id="SSF52540">
    <property type="entry name" value="P-loop containing nucleoside triphosphate hydrolases"/>
    <property type="match status" value="1"/>
</dbReference>
<dbReference type="PROSITE" id="PS00039">
    <property type="entry name" value="DEAD_ATP_HELICASE"/>
    <property type="match status" value="1"/>
</dbReference>
<dbReference type="PROSITE" id="PS51192">
    <property type="entry name" value="HELICASE_ATP_BIND_1"/>
    <property type="match status" value="1"/>
</dbReference>
<dbReference type="PROSITE" id="PS51194">
    <property type="entry name" value="HELICASE_CTER"/>
    <property type="match status" value="1"/>
</dbReference>
<dbReference type="PROSITE" id="PS51195">
    <property type="entry name" value="Q_MOTIF"/>
    <property type="match status" value="1"/>
</dbReference>
<keyword id="KW-0007">Acetylation</keyword>
<keyword id="KW-0067">ATP-binding</keyword>
<keyword id="KW-0963">Cytoplasm</keyword>
<keyword id="KW-0347">Helicase</keyword>
<keyword id="KW-0378">Hydrolase</keyword>
<keyword id="KW-1017">Isopeptide bond</keyword>
<keyword id="KW-0507">mRNA processing</keyword>
<keyword id="KW-0508">mRNA splicing</keyword>
<keyword id="KW-0509">mRNA transport</keyword>
<keyword id="KW-0866">Nonsense-mediated mRNA decay</keyword>
<keyword id="KW-0547">Nucleotide-binding</keyword>
<keyword id="KW-0539">Nucleus</keyword>
<keyword id="KW-0597">Phosphoprotein</keyword>
<keyword id="KW-1185">Reference proteome</keyword>
<keyword id="KW-0694">RNA-binding</keyword>
<keyword id="KW-0698">rRNA processing</keyword>
<keyword id="KW-0747">Spliceosome</keyword>
<keyword id="KW-0810">Translation regulation</keyword>
<keyword id="KW-0813">Transport</keyword>
<keyword id="KW-0832">Ubl conjugation</keyword>
<name>IF4A3_BOVIN</name>
<proteinExistence type="evidence at transcript level"/>
<protein>
    <recommendedName>
        <fullName>Eukaryotic initiation factor 4A-III</fullName>
        <ecNumber evidence="1">3.6.4.13</ecNumber>
    </recommendedName>
    <alternativeName>
        <fullName>ATP-dependent RNA helicase DDX48</fullName>
    </alternativeName>
    <alternativeName>
        <fullName>ATP-dependent RNA helicase eIF4A-3</fullName>
    </alternativeName>
    <alternativeName>
        <fullName>DEAD box protein 48</fullName>
    </alternativeName>
    <alternativeName>
        <fullName>Eukaryotic translation initiation factor 4A isoform 3</fullName>
    </alternativeName>
    <component>
        <recommendedName>
            <fullName>Eukaryotic initiation factor 4A-III, N-terminally processed</fullName>
        </recommendedName>
    </component>
</protein>
<feature type="chain" id="PRO_0000423266" description="Eukaryotic initiation factor 4A-III">
    <location>
        <begin position="1"/>
        <end position="411"/>
    </location>
</feature>
<feature type="initiator methionine" description="Removed; alternate" evidence="1">
    <location>
        <position position="1"/>
    </location>
</feature>
<feature type="chain" id="PRO_0000244561" description="Eukaryotic initiation factor 4A-III, N-terminally processed">
    <location>
        <begin position="2"/>
        <end position="411"/>
    </location>
</feature>
<feature type="domain" description="Helicase ATP-binding" evidence="5">
    <location>
        <begin position="69"/>
        <end position="239"/>
    </location>
</feature>
<feature type="domain" description="Helicase C-terminal" evidence="6">
    <location>
        <begin position="250"/>
        <end position="411"/>
    </location>
</feature>
<feature type="short sequence motif" description="Q motif">
    <location>
        <begin position="38"/>
        <end position="66"/>
    </location>
</feature>
<feature type="short sequence motif" description="DEAD box" evidence="7">
    <location>
        <begin position="187"/>
        <end position="190"/>
    </location>
</feature>
<feature type="binding site" evidence="1">
    <location>
        <position position="60"/>
    </location>
    <ligand>
        <name>ATP</name>
        <dbReference type="ChEBI" id="CHEBI:30616"/>
    </ligand>
</feature>
<feature type="binding site" evidence="1">
    <location>
        <position position="65"/>
    </location>
    <ligand>
        <name>ATP</name>
        <dbReference type="ChEBI" id="CHEBI:30616"/>
    </ligand>
</feature>
<feature type="binding site" evidence="5">
    <location>
        <begin position="85"/>
        <end position="90"/>
    </location>
    <ligand>
        <name>ATP</name>
        <dbReference type="ChEBI" id="CHEBI:30616"/>
    </ligand>
</feature>
<feature type="binding site" evidence="1">
    <location>
        <position position="342"/>
    </location>
    <ligand>
        <name>ATP</name>
        <dbReference type="ChEBI" id="CHEBI:30616"/>
    </ligand>
</feature>
<feature type="binding site" evidence="5">
    <location>
        <begin position="367"/>
        <end position="371"/>
    </location>
    <ligand>
        <name>ATP</name>
        <dbReference type="ChEBI" id="CHEBI:30616"/>
    </ligand>
</feature>
<feature type="modified residue" description="N-acetylmethionine" evidence="1">
    <location>
        <position position="1"/>
    </location>
</feature>
<feature type="modified residue" description="N-acetylalanine; in Eukaryotic initiation factor 4A-III, N-terminally processed" evidence="1">
    <location>
        <position position="2"/>
    </location>
</feature>
<feature type="modified residue" description="Phosphoserine" evidence="2">
    <location>
        <position position="10"/>
    </location>
</feature>
<feature type="modified residue" description="Phosphoserine" evidence="1">
    <location>
        <position position="12"/>
    </location>
</feature>
<feature type="modified residue" description="N6-acetyllysine" evidence="2">
    <location>
        <position position="124"/>
    </location>
</feature>
<feature type="modified residue" description="Phosphothreonine" evidence="1">
    <location>
        <position position="163"/>
    </location>
</feature>
<feature type="modified residue" description="N6-acetyllysine" evidence="3">
    <location>
        <position position="198"/>
    </location>
</feature>
<feature type="modified residue" description="N6-acetyllysine" evidence="1">
    <location>
        <position position="296"/>
    </location>
</feature>
<feature type="modified residue" description="N6-acetyllysine" evidence="1">
    <location>
        <position position="321"/>
    </location>
</feature>
<feature type="cross-link" description="Glycyl lysine isopeptide (Lys-Gly) (interchain with G-Cter in SUMO2)" evidence="1">
    <location>
        <position position="19"/>
    </location>
</feature>
<feature type="cross-link" description="Glycyl lysine isopeptide (Lys-Gly) (interchain with G-Cter in SUMO2)" evidence="2">
    <location>
        <position position="152"/>
    </location>
</feature>
<feature type="cross-link" description="Glycyl lysine isopeptide (Lys-Gly) (interchain with G-Cter in SUMO2)" evidence="1">
    <location>
        <position position="314"/>
    </location>
</feature>
<feature type="cross-link" description="Glycyl lysine isopeptide (Lys-Gly) (interchain with G-Cter in SUMO2)" evidence="2">
    <location>
        <position position="374"/>
    </location>
</feature>
<feature type="cross-link" description="Glycyl lysine isopeptide (Lys-Gly) (interchain with G-Cter in SUMO2)" evidence="1">
    <location>
        <position position="382"/>
    </location>
</feature>
<comment type="function">
    <text evidence="1">ATP-dependent RNA helicase. Involved in pre-mRNA splicing as component of the spliceosome. Core component of the splicing-dependent multiprotein exon junction complex (EJC) deposited at splice junctions on mRNAs. The EJC is a dynamic structure consisting of core proteins and several peripheral nuclear and cytoplasmic associated factors that join the complex only transiently either during EJC assembly or during subsequent mRNA metabolism. The EJC marks the position of the exon-exon junction in the mature mRNA for the gene expression machinery and the core components remain bound to spliced mRNAs throughout all stages of mRNA metabolism thereby influencing downstream processes including nuclear mRNA export, subcellular mRNA localization, translation efficiency and nonsense-mediated mRNA decay (NMD). Its RNA-dependent ATPase and RNA-helicase activities are induced by CASC3, but abolished in presence of the MAGOH-RBM8A heterodimer, thereby trapping the ATP-bound EJC core onto spliced mRNA in a stable conformation. The inhibition of ATPase activity by the MAGOH-RBM8A heterodimer increases the RNA-binding affinity of the EJC. Involved in translational enhancement of spliced mRNAs after formation of the 80S ribosome complex. Binds spliced mRNA in sequence-independent manner, 20-24 nucleotides upstream of mRNA exon-exon junctions. Shows higher affinity for single-stranded RNA in an ATP-bound core EJC complex than after the ATP is hydrolyzed. Involved in the splicing modulation of BCL2L1/Bcl-X (and probably other apoptotic genes); specifically inhibits formation of proapoptotic isoforms; the function is different from the established EJC assembly. Involved in craniofacial development.</text>
</comment>
<comment type="catalytic activity">
    <reaction evidence="1">
        <text>ATP + H2O = ADP + phosphate + H(+)</text>
        <dbReference type="Rhea" id="RHEA:13065"/>
        <dbReference type="ChEBI" id="CHEBI:15377"/>
        <dbReference type="ChEBI" id="CHEBI:15378"/>
        <dbReference type="ChEBI" id="CHEBI:30616"/>
        <dbReference type="ChEBI" id="CHEBI:43474"/>
        <dbReference type="ChEBI" id="CHEBI:456216"/>
        <dbReference type="EC" id="3.6.4.13"/>
    </reaction>
</comment>
<comment type="activity regulation">
    <text evidence="1">The ATPase activity is increased some 4-fold in the presence of RNA.</text>
</comment>
<comment type="subunit">
    <text evidence="1">Identified in the spliceosome C complex. Core component of the mRNA splicing-dependent exon junction complex (EJC); the core complex contains CASC3, EIF4A3, MAGOH or MAGOHB, and RBM8A. Interacts with CASC3, MAGOH, NXF1, RBM8A and ALYREF/THOC4. Component of the ALYREF/THOC4-EJC-RNA complex; in the complex interacts with MAGOH, RBM8A and THOC4 (via the WXHD motif); these interactions are likely specific to RNA-bound EJC (By similarity). May interact with NOM1. Interacts with POLDIP3. Interacts with CWC22 and PRPF19 in an RNA-independent manner. Direct interaction with CWC22 is mediated by the helicase C-terminal domain. Full interaction with CWC22 occurs only when EIF4A3 is not part of the EJC and prevents EIF4A3 binding to RNA. Identified in a complex composed of the EJC core, UPF3B and UPF2. The EJC core can also interact with UPF3A (in vitro). Interacts with NCBP3 (By similarity). Interacts with NRDE2 (By similarity). Interacts with DHX34; the interaction is RNA-independent (By similarity).</text>
</comment>
<comment type="subcellular location">
    <subcellularLocation>
        <location evidence="4">Nucleus</location>
    </subcellularLocation>
    <subcellularLocation>
        <location evidence="1">Nucleus speckle</location>
    </subcellularLocation>
    <subcellularLocation>
        <location evidence="4">Cytoplasm</location>
    </subcellularLocation>
    <text evidence="4">Nucleocytoplasmic shuttling protein. Travels to the cytoplasm as part of the exon junction complex (EJC) bound to mRNA. Detected in dendritic layer as well as the nuclear and cytoplasmic (somatic) compartments of neurons. Colocalizes with STAU1 and FMR1 in dendrites.</text>
</comment>
<comment type="similarity">
    <text evidence="7">Belongs to the DEAD box helicase family. eIF4A subfamily.</text>
</comment>
<sequence length="411" mass="46841">MAATATMATSGSARKRLLKEEDMTKVEFETSEEVDVTPTFDTMGLREDLLRGIYAYGFEKPSAIQQRAIKQIIKGRDVIAQSQSGTGKTATFSISVLQCLDIQVRETQALILAPTRELAVQIQKGLLALGDYMNVQCHACIGGTNVGEDIRKLDYGQHVVAGTPGRVFDMIRRRSLRTRAIKMLVLDEADEMLNKGFKEQIYDVYRYLPPATQVVLISATLPHEILEMTNKFMTDPIRILVKRDELTLEGIKQFFVAVEREEWKFDTLCDLYDTLTITQAVIFCNTKRKVDWLTEKMREANFTVSSMHGDMPQKERESIMKEFRSGASRVLISTDVWARGLDVPQVSLIINYDLPNNRELYIHRIGRSGRYGRKGVAINFVKNDDIRILRDIEQYYSTQIDEMPMNVADLI</sequence>